<accession>Q7VB29</accession>
<comment type="cofactor">
    <cofactor evidence="1">
        <name>Fe(2+)</name>
        <dbReference type="ChEBI" id="CHEBI:29033"/>
    </cofactor>
    <text evidence="1">Binds 1 Fe(2+) ion per subunit.</text>
</comment>
<comment type="cofactor">
    <cofactor evidence="1">
        <name>L-ascorbate</name>
        <dbReference type="ChEBI" id="CHEBI:38290"/>
    </cofactor>
</comment>
<dbReference type="EC" id="1.14.11.-" evidence="1"/>
<dbReference type="EMBL" id="AE017126">
    <property type="protein sequence ID" value="AAQ00315.1"/>
    <property type="molecule type" value="Genomic_DNA"/>
</dbReference>
<dbReference type="RefSeq" id="NP_875662.1">
    <property type="nucleotide sequence ID" value="NC_005042.1"/>
</dbReference>
<dbReference type="RefSeq" id="WP_011125422.1">
    <property type="nucleotide sequence ID" value="NC_005042.1"/>
</dbReference>
<dbReference type="SMR" id="Q7VB29"/>
<dbReference type="STRING" id="167539.Pro_1271"/>
<dbReference type="EnsemblBacteria" id="AAQ00315">
    <property type="protein sequence ID" value="AAQ00315"/>
    <property type="gene ID" value="Pro_1271"/>
</dbReference>
<dbReference type="KEGG" id="pma:Pro_1271"/>
<dbReference type="PATRIC" id="fig|167539.5.peg.1333"/>
<dbReference type="eggNOG" id="COG3128">
    <property type="taxonomic scope" value="Bacteria"/>
</dbReference>
<dbReference type="HOGENOM" id="CLU_106663_0_0_3"/>
<dbReference type="OrthoDB" id="9812472at2"/>
<dbReference type="Proteomes" id="UP000001420">
    <property type="component" value="Chromosome"/>
</dbReference>
<dbReference type="GO" id="GO:0016706">
    <property type="term" value="F:2-oxoglutarate-dependent dioxygenase activity"/>
    <property type="evidence" value="ECO:0007669"/>
    <property type="project" value="UniProtKB-UniRule"/>
</dbReference>
<dbReference type="GO" id="GO:0005506">
    <property type="term" value="F:iron ion binding"/>
    <property type="evidence" value="ECO:0007669"/>
    <property type="project" value="UniProtKB-UniRule"/>
</dbReference>
<dbReference type="GO" id="GO:0031418">
    <property type="term" value="F:L-ascorbic acid binding"/>
    <property type="evidence" value="ECO:0007669"/>
    <property type="project" value="UniProtKB-KW"/>
</dbReference>
<dbReference type="GO" id="GO:0006974">
    <property type="term" value="P:DNA damage response"/>
    <property type="evidence" value="ECO:0007669"/>
    <property type="project" value="TreeGrafter"/>
</dbReference>
<dbReference type="GO" id="GO:0006879">
    <property type="term" value="P:intracellular iron ion homeostasis"/>
    <property type="evidence" value="ECO:0007669"/>
    <property type="project" value="TreeGrafter"/>
</dbReference>
<dbReference type="Gene3D" id="2.60.120.620">
    <property type="entry name" value="q2cbj1_9rhob like domain"/>
    <property type="match status" value="1"/>
</dbReference>
<dbReference type="Gene3D" id="4.10.860.20">
    <property type="entry name" value="Rabenosyn, Rab binding domain"/>
    <property type="match status" value="1"/>
</dbReference>
<dbReference type="HAMAP" id="MF_00657">
    <property type="entry name" value="Hydroxyl_YbiX"/>
    <property type="match status" value="1"/>
</dbReference>
<dbReference type="InterPro" id="IPR005123">
    <property type="entry name" value="Oxoglu/Fe-dep_dioxygenase_dom"/>
</dbReference>
<dbReference type="InterPro" id="IPR023550">
    <property type="entry name" value="PKHD_hydroxylase"/>
</dbReference>
<dbReference type="InterPro" id="IPR006620">
    <property type="entry name" value="Pro_4_hyd_alph"/>
</dbReference>
<dbReference type="InterPro" id="IPR044862">
    <property type="entry name" value="Pro_4_hyd_alph_FE2OG_OXY"/>
</dbReference>
<dbReference type="NCBIfam" id="NF003974">
    <property type="entry name" value="PRK05467.1-3"/>
    <property type="match status" value="1"/>
</dbReference>
<dbReference type="NCBIfam" id="NF003975">
    <property type="entry name" value="PRK05467.1-4"/>
    <property type="match status" value="1"/>
</dbReference>
<dbReference type="PANTHER" id="PTHR41536">
    <property type="entry name" value="PKHD-TYPE HYDROXYLASE YBIX"/>
    <property type="match status" value="1"/>
</dbReference>
<dbReference type="PANTHER" id="PTHR41536:SF1">
    <property type="entry name" value="PKHD-TYPE HYDROXYLASE YBIX"/>
    <property type="match status" value="1"/>
</dbReference>
<dbReference type="Pfam" id="PF13640">
    <property type="entry name" value="2OG-FeII_Oxy_3"/>
    <property type="match status" value="1"/>
</dbReference>
<dbReference type="SMART" id="SM00702">
    <property type="entry name" value="P4Hc"/>
    <property type="match status" value="1"/>
</dbReference>
<dbReference type="PROSITE" id="PS51471">
    <property type="entry name" value="FE2OG_OXY"/>
    <property type="match status" value="1"/>
</dbReference>
<gene>
    <name type="ordered locus">Pro_1271</name>
</gene>
<proteinExistence type="inferred from homology"/>
<evidence type="ECO:0000255" key="1">
    <source>
        <dbReference type="HAMAP-Rule" id="MF_00657"/>
    </source>
</evidence>
<reference key="1">
    <citation type="journal article" date="2003" name="Proc. Natl. Acad. Sci. U.S.A.">
        <title>Genome sequence of the cyanobacterium Prochlorococcus marinus SS120, a nearly minimal oxyphototrophic genome.</title>
        <authorList>
            <person name="Dufresne A."/>
            <person name="Salanoubat M."/>
            <person name="Partensky F."/>
            <person name="Artiguenave F."/>
            <person name="Axmann I.M."/>
            <person name="Barbe V."/>
            <person name="Duprat S."/>
            <person name="Galperin M.Y."/>
            <person name="Koonin E.V."/>
            <person name="Le Gall F."/>
            <person name="Makarova K.S."/>
            <person name="Ostrowski M."/>
            <person name="Oztas S."/>
            <person name="Robert C."/>
            <person name="Rogozin I.B."/>
            <person name="Scanlan D.J."/>
            <person name="Tandeau de Marsac N."/>
            <person name="Weissenbach J."/>
            <person name="Wincker P."/>
            <person name="Wolf Y.I."/>
            <person name="Hess W.R."/>
        </authorList>
    </citation>
    <scope>NUCLEOTIDE SEQUENCE [LARGE SCALE GENOMIC DNA]</scope>
    <source>
        <strain>SARG / CCMP1375 / SS120</strain>
    </source>
</reference>
<protein>
    <recommendedName>
        <fullName evidence="1">PKHD-type hydroxylase Pro_1271</fullName>
        <ecNumber evidence="1">1.14.11.-</ecNumber>
    </recommendedName>
</protein>
<organism>
    <name type="scientific">Prochlorococcus marinus (strain SARG / CCMP1375 / SS120)</name>
    <dbReference type="NCBI Taxonomy" id="167539"/>
    <lineage>
        <taxon>Bacteria</taxon>
        <taxon>Bacillati</taxon>
        <taxon>Cyanobacteriota</taxon>
        <taxon>Cyanophyceae</taxon>
        <taxon>Synechococcales</taxon>
        <taxon>Prochlorococcaceae</taxon>
        <taxon>Prochlorococcus</taxon>
    </lineage>
</organism>
<feature type="chain" id="PRO_0000346498" description="PKHD-type hydroxylase Pro_1271">
    <location>
        <begin position="1"/>
        <end position="221"/>
    </location>
</feature>
<feature type="domain" description="Fe2OG dioxygenase" evidence="1">
    <location>
        <begin position="80"/>
        <end position="174"/>
    </location>
</feature>
<feature type="binding site" evidence="1">
    <location>
        <position position="98"/>
    </location>
    <ligand>
        <name>Fe cation</name>
        <dbReference type="ChEBI" id="CHEBI:24875"/>
    </ligand>
</feature>
<feature type="binding site" evidence="1">
    <location>
        <position position="100"/>
    </location>
    <ligand>
        <name>Fe cation</name>
        <dbReference type="ChEBI" id="CHEBI:24875"/>
    </ligand>
</feature>
<feature type="binding site" evidence="1">
    <location>
        <position position="155"/>
    </location>
    <ligand>
        <name>Fe cation</name>
        <dbReference type="ChEBI" id="CHEBI:24875"/>
    </ligand>
</feature>
<feature type="binding site" evidence="1">
    <location>
        <position position="165"/>
    </location>
    <ligand>
        <name>2-oxoglutarate</name>
        <dbReference type="ChEBI" id="CHEBI:16810"/>
    </ligand>
</feature>
<sequence length="221" mass="24559">MDYLTHKLLDPTRAKSCIQSIQRDQSLWKDGKSTAGLYASKVKNNLQLDKKSKVSIDNSNLIIKAIISDLLVKSFTIPRKVHGVMFSKSSKGNSYGMHLDNAYMSTGRSDLSFTLFLSDPGEYEGGELAIETIQETRKIKLPQGHIIIYPSTTLHSVEEVTSGTRIVCVGWIQSYIPNNEDRKILFSLDAGAKGLLAAHGQSHELDLVFQSYNNLLRRLGG</sequence>
<keyword id="KW-0223">Dioxygenase</keyword>
<keyword id="KW-0408">Iron</keyword>
<keyword id="KW-0479">Metal-binding</keyword>
<keyword id="KW-0560">Oxidoreductase</keyword>
<keyword id="KW-1185">Reference proteome</keyword>
<keyword id="KW-0847">Vitamin C</keyword>
<name>Y1271_PROMA</name>